<feature type="chain" id="PRO_1000077334" description="1-deoxy-D-xylulose 5-phosphate reductoisomerase">
    <location>
        <begin position="1"/>
        <end position="388"/>
    </location>
</feature>
<feature type="binding site" evidence="1">
    <location>
        <position position="10"/>
    </location>
    <ligand>
        <name>NADPH</name>
        <dbReference type="ChEBI" id="CHEBI:57783"/>
    </ligand>
</feature>
<feature type="binding site" evidence="1">
    <location>
        <position position="11"/>
    </location>
    <ligand>
        <name>NADPH</name>
        <dbReference type="ChEBI" id="CHEBI:57783"/>
    </ligand>
</feature>
<feature type="binding site" evidence="1">
    <location>
        <position position="12"/>
    </location>
    <ligand>
        <name>NADPH</name>
        <dbReference type="ChEBI" id="CHEBI:57783"/>
    </ligand>
</feature>
<feature type="binding site" evidence="1">
    <location>
        <position position="13"/>
    </location>
    <ligand>
        <name>NADPH</name>
        <dbReference type="ChEBI" id="CHEBI:57783"/>
    </ligand>
</feature>
<feature type="binding site" evidence="1">
    <location>
        <position position="37"/>
    </location>
    <ligand>
        <name>NADPH</name>
        <dbReference type="ChEBI" id="CHEBI:57783"/>
    </ligand>
</feature>
<feature type="binding site" evidence="1">
    <location>
        <position position="121"/>
    </location>
    <ligand>
        <name>NADPH</name>
        <dbReference type="ChEBI" id="CHEBI:57783"/>
    </ligand>
</feature>
<feature type="binding site" evidence="1">
    <location>
        <position position="122"/>
    </location>
    <ligand>
        <name>1-deoxy-D-xylulose 5-phosphate</name>
        <dbReference type="ChEBI" id="CHEBI:57792"/>
    </ligand>
</feature>
<feature type="binding site" evidence="1">
    <location>
        <position position="123"/>
    </location>
    <ligand>
        <name>NADPH</name>
        <dbReference type="ChEBI" id="CHEBI:57783"/>
    </ligand>
</feature>
<feature type="binding site" evidence="1">
    <location>
        <position position="147"/>
    </location>
    <ligand>
        <name>Mn(2+)</name>
        <dbReference type="ChEBI" id="CHEBI:29035"/>
    </ligand>
</feature>
<feature type="binding site" evidence="1">
    <location>
        <position position="148"/>
    </location>
    <ligand>
        <name>1-deoxy-D-xylulose 5-phosphate</name>
        <dbReference type="ChEBI" id="CHEBI:57792"/>
    </ligand>
</feature>
<feature type="binding site" evidence="1">
    <location>
        <position position="149"/>
    </location>
    <ligand>
        <name>1-deoxy-D-xylulose 5-phosphate</name>
        <dbReference type="ChEBI" id="CHEBI:57792"/>
    </ligand>
</feature>
<feature type="binding site" evidence="1">
    <location>
        <position position="149"/>
    </location>
    <ligand>
        <name>Mn(2+)</name>
        <dbReference type="ChEBI" id="CHEBI:29035"/>
    </ligand>
</feature>
<feature type="binding site" evidence="1">
    <location>
        <position position="173"/>
    </location>
    <ligand>
        <name>1-deoxy-D-xylulose 5-phosphate</name>
        <dbReference type="ChEBI" id="CHEBI:57792"/>
    </ligand>
</feature>
<feature type="binding site" evidence="1">
    <location>
        <position position="196"/>
    </location>
    <ligand>
        <name>1-deoxy-D-xylulose 5-phosphate</name>
        <dbReference type="ChEBI" id="CHEBI:57792"/>
    </ligand>
</feature>
<feature type="binding site" evidence="1">
    <location>
        <position position="202"/>
    </location>
    <ligand>
        <name>NADPH</name>
        <dbReference type="ChEBI" id="CHEBI:57783"/>
    </ligand>
</feature>
<feature type="binding site" evidence="1">
    <location>
        <position position="209"/>
    </location>
    <ligand>
        <name>1-deoxy-D-xylulose 5-phosphate</name>
        <dbReference type="ChEBI" id="CHEBI:57792"/>
    </ligand>
</feature>
<feature type="binding site" evidence="1">
    <location>
        <position position="214"/>
    </location>
    <ligand>
        <name>1-deoxy-D-xylulose 5-phosphate</name>
        <dbReference type="ChEBI" id="CHEBI:57792"/>
    </ligand>
</feature>
<feature type="binding site" evidence="1">
    <location>
        <position position="215"/>
    </location>
    <ligand>
        <name>1-deoxy-D-xylulose 5-phosphate</name>
        <dbReference type="ChEBI" id="CHEBI:57792"/>
    </ligand>
</feature>
<feature type="binding site" evidence="1">
    <location>
        <position position="218"/>
    </location>
    <ligand>
        <name>1-deoxy-D-xylulose 5-phosphate</name>
        <dbReference type="ChEBI" id="CHEBI:57792"/>
    </ligand>
</feature>
<feature type="binding site" evidence="1">
    <location>
        <position position="218"/>
    </location>
    <ligand>
        <name>Mn(2+)</name>
        <dbReference type="ChEBI" id="CHEBI:29035"/>
    </ligand>
</feature>
<name>DXR_LACP7</name>
<protein>
    <recommendedName>
        <fullName evidence="1">1-deoxy-D-xylulose 5-phosphate reductoisomerase</fullName>
        <shortName evidence="1">DXP reductoisomerase</shortName>
        <ecNumber evidence="1">1.1.1.267</ecNumber>
    </recommendedName>
    <alternativeName>
        <fullName evidence="1">1-deoxyxylulose-5-phosphate reductoisomerase</fullName>
    </alternativeName>
    <alternativeName>
        <fullName evidence="1">2-C-methyl-D-erythritol 4-phosphate synthase</fullName>
    </alternativeName>
</protein>
<organism>
    <name type="scientific">Lachnoclostridium phytofermentans (strain ATCC 700394 / DSM 18823 / ISDg)</name>
    <name type="common">Clostridium phytofermentans</name>
    <dbReference type="NCBI Taxonomy" id="357809"/>
    <lineage>
        <taxon>Bacteria</taxon>
        <taxon>Bacillati</taxon>
        <taxon>Bacillota</taxon>
        <taxon>Clostridia</taxon>
        <taxon>Lachnospirales</taxon>
        <taxon>Lachnospiraceae</taxon>
    </lineage>
</organism>
<reference key="1">
    <citation type="submission" date="2007-11" db="EMBL/GenBank/DDBJ databases">
        <title>Complete genome sequence of Clostridium phytofermentans ISDg.</title>
        <authorList>
            <person name="Leschine S.B."/>
            <person name="Warnick T.A."/>
            <person name="Blanchard J.L."/>
            <person name="Schnell D.J."/>
            <person name="Petit E.L."/>
            <person name="LaTouf W.G."/>
            <person name="Copeland A."/>
            <person name="Lucas S."/>
            <person name="Lapidus A."/>
            <person name="Barry K."/>
            <person name="Glavina del Rio T."/>
            <person name="Dalin E."/>
            <person name="Tice H."/>
            <person name="Pitluck S."/>
            <person name="Kiss H."/>
            <person name="Brettin T."/>
            <person name="Bruce D."/>
            <person name="Detter J.C."/>
            <person name="Han C."/>
            <person name="Kuske C."/>
            <person name="Schmutz J."/>
            <person name="Larimer F."/>
            <person name="Land M."/>
            <person name="Hauser L."/>
            <person name="Kyrpides N."/>
            <person name="Kim E.A."/>
            <person name="Richardson P."/>
        </authorList>
    </citation>
    <scope>NUCLEOTIDE SEQUENCE [LARGE SCALE GENOMIC DNA]</scope>
    <source>
        <strain>ATCC 700394 / DSM 18823 / ISDg</strain>
    </source>
</reference>
<keyword id="KW-0414">Isoprene biosynthesis</keyword>
<keyword id="KW-0464">Manganese</keyword>
<keyword id="KW-0479">Metal-binding</keyword>
<keyword id="KW-0521">NADP</keyword>
<keyword id="KW-0560">Oxidoreductase</keyword>
<keyword id="KW-1185">Reference proteome</keyword>
<gene>
    <name evidence="1" type="primary">dxr</name>
    <name type="ordered locus">Cphy_2622</name>
</gene>
<evidence type="ECO:0000255" key="1">
    <source>
        <dbReference type="HAMAP-Rule" id="MF_00183"/>
    </source>
</evidence>
<dbReference type="EC" id="1.1.1.267" evidence="1"/>
<dbReference type="EMBL" id="CP000885">
    <property type="protein sequence ID" value="ABX42983.1"/>
    <property type="molecule type" value="Genomic_DNA"/>
</dbReference>
<dbReference type="RefSeq" id="WP_012200635.1">
    <property type="nucleotide sequence ID" value="NC_010001.1"/>
</dbReference>
<dbReference type="SMR" id="A9KMX2"/>
<dbReference type="STRING" id="357809.Cphy_2622"/>
<dbReference type="KEGG" id="cpy:Cphy_2622"/>
<dbReference type="eggNOG" id="COG0743">
    <property type="taxonomic scope" value="Bacteria"/>
</dbReference>
<dbReference type="HOGENOM" id="CLU_035714_4_0_9"/>
<dbReference type="OrthoDB" id="9806546at2"/>
<dbReference type="UniPathway" id="UPA00056">
    <property type="reaction ID" value="UER00092"/>
</dbReference>
<dbReference type="Proteomes" id="UP000000370">
    <property type="component" value="Chromosome"/>
</dbReference>
<dbReference type="GO" id="GO:0030604">
    <property type="term" value="F:1-deoxy-D-xylulose-5-phosphate reductoisomerase activity"/>
    <property type="evidence" value="ECO:0007669"/>
    <property type="project" value="UniProtKB-UniRule"/>
</dbReference>
<dbReference type="GO" id="GO:0030145">
    <property type="term" value="F:manganese ion binding"/>
    <property type="evidence" value="ECO:0007669"/>
    <property type="project" value="TreeGrafter"/>
</dbReference>
<dbReference type="GO" id="GO:0070402">
    <property type="term" value="F:NADPH binding"/>
    <property type="evidence" value="ECO:0007669"/>
    <property type="project" value="InterPro"/>
</dbReference>
<dbReference type="GO" id="GO:0051484">
    <property type="term" value="P:isopentenyl diphosphate biosynthetic process, methylerythritol 4-phosphate pathway involved in terpenoid biosynthetic process"/>
    <property type="evidence" value="ECO:0007669"/>
    <property type="project" value="TreeGrafter"/>
</dbReference>
<dbReference type="FunFam" id="3.40.50.720:FF:000045">
    <property type="entry name" value="1-deoxy-D-xylulose 5-phosphate reductoisomerase"/>
    <property type="match status" value="1"/>
</dbReference>
<dbReference type="Gene3D" id="1.10.1740.10">
    <property type="match status" value="1"/>
</dbReference>
<dbReference type="Gene3D" id="3.40.50.720">
    <property type="entry name" value="NAD(P)-binding Rossmann-like Domain"/>
    <property type="match status" value="1"/>
</dbReference>
<dbReference type="HAMAP" id="MF_00183">
    <property type="entry name" value="DXP_reductoisom"/>
    <property type="match status" value="1"/>
</dbReference>
<dbReference type="InterPro" id="IPR003821">
    <property type="entry name" value="DXP_reductoisomerase"/>
</dbReference>
<dbReference type="InterPro" id="IPR013644">
    <property type="entry name" value="DXP_reductoisomerase_C"/>
</dbReference>
<dbReference type="InterPro" id="IPR013512">
    <property type="entry name" value="DXP_reductoisomerase_N"/>
</dbReference>
<dbReference type="InterPro" id="IPR026877">
    <property type="entry name" value="DXPR_C"/>
</dbReference>
<dbReference type="InterPro" id="IPR036169">
    <property type="entry name" value="DXPR_C_sf"/>
</dbReference>
<dbReference type="InterPro" id="IPR036291">
    <property type="entry name" value="NAD(P)-bd_dom_sf"/>
</dbReference>
<dbReference type="NCBIfam" id="TIGR00243">
    <property type="entry name" value="Dxr"/>
    <property type="match status" value="1"/>
</dbReference>
<dbReference type="NCBIfam" id="NF009114">
    <property type="entry name" value="PRK12464.1"/>
    <property type="match status" value="1"/>
</dbReference>
<dbReference type="PANTHER" id="PTHR30525">
    <property type="entry name" value="1-DEOXY-D-XYLULOSE 5-PHOSPHATE REDUCTOISOMERASE"/>
    <property type="match status" value="1"/>
</dbReference>
<dbReference type="PANTHER" id="PTHR30525:SF0">
    <property type="entry name" value="1-DEOXY-D-XYLULOSE 5-PHOSPHATE REDUCTOISOMERASE, CHLOROPLASTIC"/>
    <property type="match status" value="1"/>
</dbReference>
<dbReference type="Pfam" id="PF08436">
    <property type="entry name" value="DXP_redisom_C"/>
    <property type="match status" value="1"/>
</dbReference>
<dbReference type="Pfam" id="PF02670">
    <property type="entry name" value="DXP_reductoisom"/>
    <property type="match status" value="1"/>
</dbReference>
<dbReference type="Pfam" id="PF13288">
    <property type="entry name" value="DXPR_C"/>
    <property type="match status" value="1"/>
</dbReference>
<dbReference type="PIRSF" id="PIRSF006205">
    <property type="entry name" value="Dxp_reductismrs"/>
    <property type="match status" value="1"/>
</dbReference>
<dbReference type="SUPFAM" id="SSF69055">
    <property type="entry name" value="1-deoxy-D-xylulose-5-phosphate reductoisomerase, C-terminal domain"/>
    <property type="match status" value="1"/>
</dbReference>
<dbReference type="SUPFAM" id="SSF55347">
    <property type="entry name" value="Glyceraldehyde-3-phosphate dehydrogenase-like, C-terminal domain"/>
    <property type="match status" value="1"/>
</dbReference>
<dbReference type="SUPFAM" id="SSF51735">
    <property type="entry name" value="NAD(P)-binding Rossmann-fold domains"/>
    <property type="match status" value="1"/>
</dbReference>
<accession>A9KMX2</accession>
<comment type="function">
    <text evidence="1">Catalyzes the NADPH-dependent rearrangement and reduction of 1-deoxy-D-xylulose-5-phosphate (DXP) to 2-C-methyl-D-erythritol 4-phosphate (MEP).</text>
</comment>
<comment type="catalytic activity">
    <reaction evidence="1">
        <text>2-C-methyl-D-erythritol 4-phosphate + NADP(+) = 1-deoxy-D-xylulose 5-phosphate + NADPH + H(+)</text>
        <dbReference type="Rhea" id="RHEA:13717"/>
        <dbReference type="ChEBI" id="CHEBI:15378"/>
        <dbReference type="ChEBI" id="CHEBI:57783"/>
        <dbReference type="ChEBI" id="CHEBI:57792"/>
        <dbReference type="ChEBI" id="CHEBI:58262"/>
        <dbReference type="ChEBI" id="CHEBI:58349"/>
        <dbReference type="EC" id="1.1.1.267"/>
    </reaction>
    <physiologicalReaction direction="right-to-left" evidence="1">
        <dbReference type="Rhea" id="RHEA:13719"/>
    </physiologicalReaction>
</comment>
<comment type="cofactor">
    <cofactor evidence="1">
        <name>Mg(2+)</name>
        <dbReference type="ChEBI" id="CHEBI:18420"/>
    </cofactor>
    <cofactor evidence="1">
        <name>Mn(2+)</name>
        <dbReference type="ChEBI" id="CHEBI:29035"/>
    </cofactor>
</comment>
<comment type="pathway">
    <text evidence="1">Isoprenoid biosynthesis; isopentenyl diphosphate biosynthesis via DXP pathway; isopentenyl diphosphate from 1-deoxy-D-xylulose 5-phosphate: step 1/6.</text>
</comment>
<comment type="similarity">
    <text evidence="1">Belongs to the DXR family.</text>
</comment>
<proteinExistence type="inferred from homology"/>
<sequence>MKIISVLGSTGSIGTQTLEVVRNNKDLKVSALAASSNITLLEEQIREFHPKLVCVYDREKALELKKRVSDLEVTVEAGMDGLIACATEESADIVVSAVVGMIGIKPVMEAILRGKDIAFANKETLVTAGHLIMPLVKKHNVNLLPVDSEHSAIFQCLQGNESSTVSRIILTASGGPFRGKSLAELKNVKVEDALKHPNWSMGRKITIDSATMVNKGLEVMEAHWLFHEPLNKIEVVIQPQSIIHSAVEFEDGGIIAQLGTPDMKLPIQYALYYPEKRRYLPGKRLDFFDIAKITFEKPDISNLPGLRLAYEAMNTGHSVPTVFNAANELAVAKFLNREISFLSITALIEKAMENVTVVKRPTLDEILNVEQETYDFIERECVKSNYHI</sequence>